<dbReference type="SMR" id="P0DL73"/>
<dbReference type="GO" id="GO:0005576">
    <property type="term" value="C:extracellular region"/>
    <property type="evidence" value="ECO:0007669"/>
    <property type="project" value="UniProtKB-SubCell"/>
</dbReference>
<dbReference type="GO" id="GO:0005246">
    <property type="term" value="F:calcium channel regulator activity"/>
    <property type="evidence" value="ECO:0007669"/>
    <property type="project" value="UniProtKB-KW"/>
</dbReference>
<dbReference type="GO" id="GO:0008200">
    <property type="term" value="F:ion channel inhibitor activity"/>
    <property type="evidence" value="ECO:0007669"/>
    <property type="project" value="InterPro"/>
</dbReference>
<dbReference type="GO" id="GO:0017080">
    <property type="term" value="F:sodium channel regulator activity"/>
    <property type="evidence" value="ECO:0007669"/>
    <property type="project" value="UniProtKB-KW"/>
</dbReference>
<dbReference type="GO" id="GO:0090729">
    <property type="term" value="F:toxin activity"/>
    <property type="evidence" value="ECO:0007669"/>
    <property type="project" value="UniProtKB-KW"/>
</dbReference>
<dbReference type="InterPro" id="IPR011696">
    <property type="entry name" value="Huwentoxin-1"/>
</dbReference>
<dbReference type="InterPro" id="IPR013140">
    <property type="entry name" value="Huwentoxin_CS1"/>
</dbReference>
<dbReference type="Pfam" id="PF07740">
    <property type="entry name" value="Toxin_12"/>
    <property type="match status" value="1"/>
</dbReference>
<dbReference type="SUPFAM" id="SSF57059">
    <property type="entry name" value="omega toxin-like"/>
    <property type="match status" value="1"/>
</dbReference>
<dbReference type="PROSITE" id="PS60021">
    <property type="entry name" value="HWTX_1"/>
    <property type="match status" value="1"/>
</dbReference>
<accession>P0DL73</accession>
<comment type="function">
    <text evidence="1 2 3">Potent voltage-gated sodium channel blocker (PubMed:24211312). Potently inhibits the voltage-gated sodium channels Nav1.7/SCN9A (IC(50)=0.58-10 nM) (By similarity) (PubMed:24211312). Shows a moderate activity on Nav1.1/SCN1A (IC(50)=6 nM), Nav1.2/SCN2A (IC(50)=5-128 nM), Nav1.3/SCN3A (IC(50)=20.3-170 nM), and Nav1.6/SCN8A (IC(50)=17-20.1 nM) (By similarity) (PubMed:24211312). Shows an unclear inhibition of Nav1.4/SCN4A (IC(50)=200 nM to &gt;10 uM), Nav1.5/SCN5A (IC(50)=140 nM to &gt;10 uM) and Nav1.8/SCN10A (IC(50)=68-12200 nM) (By similarity) (PubMed:24211312). Weakly blocks the low voltage-gated calcium channels Cav3.1/CACNA1G (30% inhibition of the peak current by 9.8 nM of the toxin) (By similarity). It shows moderate affinity for lipid bilayers (By similarity).</text>
</comment>
<comment type="subcellular location">
    <subcellularLocation>
        <location evidence="3">Secreted</location>
    </subcellularLocation>
</comment>
<comment type="tissue specificity">
    <text evidence="6">Expressed by the venom gland.</text>
</comment>
<comment type="domain">
    <text evidence="2">The presence of a 'disulfide through disulfide knot' structurally defines this protein as a knottin.</text>
</comment>
<comment type="domain">
    <text evidence="2">This toxin is amphipathic in nature with a hydrophobic face on one side of the molecule (composed of residues 5-Phe-Met-6 and 27-His--Phe-34) and a hydrophilic (mostly cationic) face on the opposite side (composed of residues 10-Ile--Lys-15 and 18-Arg--Pro-19).</text>
</comment>
<comment type="mass spectrometry" mass="4070.8" method="Electrospray" evidence="3">
    <text>Monoisotopic mass.</text>
</comment>
<comment type="miscellaneous">
    <text evidence="5">The primary structure of the mature peptide is identical to that of Gtx1-15 from Grammostola rosea (AC P0DJA9) and GpTx-1 from Grammostola porteri (AC P0DL72).</text>
</comment>
<comment type="similarity">
    <text evidence="5">Belongs to the neurotoxin 10 (Hwtx-1) family. 08 (Gtx1-15) subfamily.</text>
</comment>
<organism>
    <name type="scientific">Paraphysa scrofa</name>
    <name type="common">Chilean copper tarantula</name>
    <name type="synonym">Phrixotrichus auratus</name>
    <dbReference type="NCBI Taxonomy" id="269635"/>
    <lineage>
        <taxon>Eukaryota</taxon>
        <taxon>Metazoa</taxon>
        <taxon>Ecdysozoa</taxon>
        <taxon>Arthropoda</taxon>
        <taxon>Chelicerata</taxon>
        <taxon>Arachnida</taxon>
        <taxon>Araneae</taxon>
        <taxon>Mygalomorphae</taxon>
        <taxon>Theraphosidae</taxon>
        <taxon>Paraphysa</taxon>
    </lineage>
</organism>
<proteinExistence type="evidence at protein level"/>
<keyword id="KW-0027">Amidation</keyword>
<keyword id="KW-0108">Calcium channel impairing toxin</keyword>
<keyword id="KW-0903">Direct protein sequencing</keyword>
<keyword id="KW-1015">Disulfide bond</keyword>
<keyword id="KW-0872">Ion channel impairing toxin</keyword>
<keyword id="KW-0528">Neurotoxin</keyword>
<keyword id="KW-0964">Secreted</keyword>
<keyword id="KW-0800">Toxin</keyword>
<keyword id="KW-1218">Voltage-gated calcium channel impairing toxin</keyword>
<keyword id="KW-0738">Voltage-gated sodium channel impairing toxin</keyword>
<feature type="chain" id="PRO_0000441930" description="Toxin GTx1-15" evidence="3">
    <location>
        <begin position="1"/>
        <end position="34"/>
    </location>
</feature>
<feature type="modified residue" description="Phenylalanine amide" evidence="3">
    <location>
        <position position="34"/>
    </location>
</feature>
<feature type="disulfide bond" evidence="2">
    <location>
        <begin position="2"/>
        <end position="17"/>
    </location>
</feature>
<feature type="disulfide bond" evidence="2">
    <location>
        <begin position="9"/>
        <end position="23"/>
    </location>
</feature>
<feature type="disulfide bond" evidence="2">
    <location>
        <begin position="16"/>
        <end position="30"/>
    </location>
</feature>
<protein>
    <recommendedName>
        <fullName evidence="4">Toxin GTx1-15</fullName>
    </recommendedName>
    <alternativeName>
        <fullName evidence="5">Beta/omega-theraphotoxin-Gr2a</fullName>
        <shortName evidence="5">Beta/omega-TRTX-Gr2a</shortName>
    </alternativeName>
    <alternativeName>
        <fullName evidence="2">Toxin GpTx-1</fullName>
    </alternativeName>
</protein>
<evidence type="ECO:0000250" key="1">
    <source>
        <dbReference type="UniProtKB" id="P0DJA9"/>
    </source>
</evidence>
<evidence type="ECO:0000250" key="2">
    <source>
        <dbReference type="UniProtKB" id="P0DL72"/>
    </source>
</evidence>
<evidence type="ECO:0000269" key="3">
    <source>
    </source>
</evidence>
<evidence type="ECO:0000303" key="4">
    <source>
    </source>
</evidence>
<evidence type="ECO:0000305" key="5"/>
<evidence type="ECO:0000305" key="6">
    <source>
    </source>
</evidence>
<sequence length="34" mass="4081">DCLGFMRKCIPDNDKCCRPNLVCSRTHKWCKYVF</sequence>
<reference key="1">
    <citation type="journal article" date="2014" name="Toxicon">
        <title>Two tarantula venom peptides as potent and differential Na(V) channels blockers.</title>
        <authorList>
            <person name="Cherki R.S."/>
            <person name="Kolb E."/>
            <person name="Langut Y."/>
            <person name="Tsveyer L."/>
            <person name="Bajayo N."/>
            <person name="Meir A."/>
        </authorList>
    </citation>
    <scope>PROTEIN SEQUENCE</scope>
    <scope>SUBCELLULAR LOCATION</scope>
    <scope>SYNTHESIS</scope>
    <scope>AMIDATION AT PHE-34</scope>
    <scope>MASS SPECTROMETRY</scope>
    <source>
        <tissue>Venom</tissue>
    </source>
</reference>
<name>TX15_PARSR</name>